<gene>
    <name evidence="1" type="primary">rpsJ</name>
    <name type="ordered locus">BCB4264_A0130</name>
</gene>
<protein>
    <recommendedName>
        <fullName evidence="1">Small ribosomal subunit protein uS10</fullName>
    </recommendedName>
    <alternativeName>
        <fullName evidence="2">30S ribosomal protein S10</fullName>
    </alternativeName>
</protein>
<name>RS10_BACC4</name>
<feature type="chain" id="PRO_1000127078" description="Small ribosomal subunit protein uS10">
    <location>
        <begin position="1"/>
        <end position="102"/>
    </location>
</feature>
<reference key="1">
    <citation type="submission" date="2008-10" db="EMBL/GenBank/DDBJ databases">
        <title>Genome sequence of Bacillus cereus B4264.</title>
        <authorList>
            <person name="Dodson R.J."/>
            <person name="Durkin A.S."/>
            <person name="Rosovitz M.J."/>
            <person name="Rasko D.A."/>
            <person name="Hoffmaster A."/>
            <person name="Ravel J."/>
            <person name="Sutton G."/>
        </authorList>
    </citation>
    <scope>NUCLEOTIDE SEQUENCE [LARGE SCALE GENOMIC DNA]</scope>
    <source>
        <strain>B4264</strain>
    </source>
</reference>
<comment type="function">
    <text evidence="1">Involved in the binding of tRNA to the ribosomes.</text>
</comment>
<comment type="subunit">
    <text evidence="1">Part of the 30S ribosomal subunit.</text>
</comment>
<comment type="similarity">
    <text evidence="1">Belongs to the universal ribosomal protein uS10 family.</text>
</comment>
<keyword id="KW-0687">Ribonucleoprotein</keyword>
<keyword id="KW-0689">Ribosomal protein</keyword>
<sequence length="102" mass="11684">MAKEKIRIRLKAYDHRILDQSAEKIVETAKRSGATVSGPIPLPTEKTVYTILRAVHKYKDSREQFEMRTHKRLIDIVSPTPQTVDSLMRLDLPSGVDIEIKL</sequence>
<accession>B7HJ47</accession>
<evidence type="ECO:0000255" key="1">
    <source>
        <dbReference type="HAMAP-Rule" id="MF_00508"/>
    </source>
</evidence>
<evidence type="ECO:0000305" key="2"/>
<proteinExistence type="inferred from homology"/>
<organism>
    <name type="scientific">Bacillus cereus (strain B4264)</name>
    <dbReference type="NCBI Taxonomy" id="405532"/>
    <lineage>
        <taxon>Bacteria</taxon>
        <taxon>Bacillati</taxon>
        <taxon>Bacillota</taxon>
        <taxon>Bacilli</taxon>
        <taxon>Bacillales</taxon>
        <taxon>Bacillaceae</taxon>
        <taxon>Bacillus</taxon>
        <taxon>Bacillus cereus group</taxon>
    </lineage>
</organism>
<dbReference type="EMBL" id="CP001176">
    <property type="protein sequence ID" value="ACK62558.1"/>
    <property type="molecule type" value="Genomic_DNA"/>
</dbReference>
<dbReference type="RefSeq" id="WP_001040596.1">
    <property type="nucleotide sequence ID" value="NZ_VEHB01000017.1"/>
</dbReference>
<dbReference type="SMR" id="B7HJ47"/>
<dbReference type="GeneID" id="93010944"/>
<dbReference type="KEGG" id="bcb:BCB4264_A0130"/>
<dbReference type="HOGENOM" id="CLU_122625_1_3_9"/>
<dbReference type="Proteomes" id="UP000007096">
    <property type="component" value="Chromosome"/>
</dbReference>
<dbReference type="GO" id="GO:1990904">
    <property type="term" value="C:ribonucleoprotein complex"/>
    <property type="evidence" value="ECO:0007669"/>
    <property type="project" value="UniProtKB-KW"/>
</dbReference>
<dbReference type="GO" id="GO:0005840">
    <property type="term" value="C:ribosome"/>
    <property type="evidence" value="ECO:0007669"/>
    <property type="project" value="UniProtKB-KW"/>
</dbReference>
<dbReference type="GO" id="GO:0003735">
    <property type="term" value="F:structural constituent of ribosome"/>
    <property type="evidence" value="ECO:0007669"/>
    <property type="project" value="InterPro"/>
</dbReference>
<dbReference type="GO" id="GO:0000049">
    <property type="term" value="F:tRNA binding"/>
    <property type="evidence" value="ECO:0007669"/>
    <property type="project" value="UniProtKB-UniRule"/>
</dbReference>
<dbReference type="GO" id="GO:0006412">
    <property type="term" value="P:translation"/>
    <property type="evidence" value="ECO:0007669"/>
    <property type="project" value="UniProtKB-UniRule"/>
</dbReference>
<dbReference type="FunFam" id="3.30.70.600:FF:000001">
    <property type="entry name" value="30S ribosomal protein S10"/>
    <property type="match status" value="1"/>
</dbReference>
<dbReference type="Gene3D" id="3.30.70.600">
    <property type="entry name" value="Ribosomal protein S10 domain"/>
    <property type="match status" value="1"/>
</dbReference>
<dbReference type="HAMAP" id="MF_00508">
    <property type="entry name" value="Ribosomal_uS10"/>
    <property type="match status" value="1"/>
</dbReference>
<dbReference type="InterPro" id="IPR001848">
    <property type="entry name" value="Ribosomal_uS10"/>
</dbReference>
<dbReference type="InterPro" id="IPR018268">
    <property type="entry name" value="Ribosomal_uS10_CS"/>
</dbReference>
<dbReference type="InterPro" id="IPR027486">
    <property type="entry name" value="Ribosomal_uS10_dom"/>
</dbReference>
<dbReference type="InterPro" id="IPR036838">
    <property type="entry name" value="Ribosomal_uS10_dom_sf"/>
</dbReference>
<dbReference type="NCBIfam" id="NF001861">
    <property type="entry name" value="PRK00596.1"/>
    <property type="match status" value="1"/>
</dbReference>
<dbReference type="NCBIfam" id="TIGR01049">
    <property type="entry name" value="rpsJ_bact"/>
    <property type="match status" value="1"/>
</dbReference>
<dbReference type="PANTHER" id="PTHR11700">
    <property type="entry name" value="30S RIBOSOMAL PROTEIN S10 FAMILY MEMBER"/>
    <property type="match status" value="1"/>
</dbReference>
<dbReference type="Pfam" id="PF00338">
    <property type="entry name" value="Ribosomal_S10"/>
    <property type="match status" value="1"/>
</dbReference>
<dbReference type="PRINTS" id="PR00971">
    <property type="entry name" value="RIBOSOMALS10"/>
</dbReference>
<dbReference type="SMART" id="SM01403">
    <property type="entry name" value="Ribosomal_S10"/>
    <property type="match status" value="1"/>
</dbReference>
<dbReference type="SUPFAM" id="SSF54999">
    <property type="entry name" value="Ribosomal protein S10"/>
    <property type="match status" value="1"/>
</dbReference>
<dbReference type="PROSITE" id="PS00361">
    <property type="entry name" value="RIBOSOMAL_S10"/>
    <property type="match status" value="1"/>
</dbReference>